<organism>
    <name type="scientific">Shigella flexneri</name>
    <dbReference type="NCBI Taxonomy" id="623"/>
    <lineage>
        <taxon>Bacteria</taxon>
        <taxon>Pseudomonadati</taxon>
        <taxon>Pseudomonadota</taxon>
        <taxon>Gammaproteobacteria</taxon>
        <taxon>Enterobacterales</taxon>
        <taxon>Enterobacteriaceae</taxon>
        <taxon>Shigella</taxon>
    </lineage>
</organism>
<proteinExistence type="inferred from homology"/>
<evidence type="ECO:0000250" key="1"/>
<evidence type="ECO:0000305" key="2"/>
<sequence length="237" mass="26995">MQKQAELYRGKAKTVYSTENPDLLVLEFRNDTSAGDGARIEQFDRKGMVNNKFNYFIMSKLAEAGIPTQMERLLSDTECLVKKLDMVPVECVVRNRAAGSLVKRLGIEEGIELNPPLFDLFLKNDAMHDPMVNESYCETFGWVSKENLARMKELTYKANDVLKKLFDDAGLILVDFKLEFGLYKGEVVLGDEFSPDGSRLWDKETLEKMDKDRFRQSLGGLIEAYEAVARRLGVQLD</sequence>
<dbReference type="EC" id="6.3.2.6"/>
<dbReference type="EMBL" id="AE005674">
    <property type="protein sequence ID" value="AAN44022.2"/>
    <property type="molecule type" value="Genomic_DNA"/>
</dbReference>
<dbReference type="EMBL" id="AE014073">
    <property type="protein sequence ID" value="AAP17836.1"/>
    <property type="molecule type" value="Genomic_DNA"/>
</dbReference>
<dbReference type="RefSeq" id="NP_708315.2">
    <property type="nucleotide sequence ID" value="NC_004337.2"/>
</dbReference>
<dbReference type="RefSeq" id="WP_001295467.1">
    <property type="nucleotide sequence ID" value="NZ_WPGW01000011.1"/>
</dbReference>
<dbReference type="SMR" id="P0A7E0"/>
<dbReference type="STRING" id="198214.SF2519"/>
<dbReference type="PaxDb" id="198214-SF2519"/>
<dbReference type="GeneID" id="1026813"/>
<dbReference type="GeneID" id="89517285"/>
<dbReference type="KEGG" id="sfl:SF2519"/>
<dbReference type="KEGG" id="sfx:S2669"/>
<dbReference type="PATRIC" id="fig|198214.7.peg.3011"/>
<dbReference type="HOGENOM" id="CLU_061495_2_1_6"/>
<dbReference type="UniPathway" id="UPA00074">
    <property type="reaction ID" value="UER00131"/>
</dbReference>
<dbReference type="Proteomes" id="UP000001006">
    <property type="component" value="Chromosome"/>
</dbReference>
<dbReference type="Proteomes" id="UP000002673">
    <property type="component" value="Chromosome"/>
</dbReference>
<dbReference type="GO" id="GO:0005829">
    <property type="term" value="C:cytosol"/>
    <property type="evidence" value="ECO:0007669"/>
    <property type="project" value="TreeGrafter"/>
</dbReference>
<dbReference type="GO" id="GO:0005524">
    <property type="term" value="F:ATP binding"/>
    <property type="evidence" value="ECO:0007669"/>
    <property type="project" value="UniProtKB-KW"/>
</dbReference>
<dbReference type="GO" id="GO:0004639">
    <property type="term" value="F:phosphoribosylaminoimidazolesuccinocarboxamide synthase activity"/>
    <property type="evidence" value="ECO:0007669"/>
    <property type="project" value="UniProtKB-UniRule"/>
</dbReference>
<dbReference type="GO" id="GO:0006189">
    <property type="term" value="P:'de novo' IMP biosynthetic process"/>
    <property type="evidence" value="ECO:0007669"/>
    <property type="project" value="UniProtKB-UniRule"/>
</dbReference>
<dbReference type="GO" id="GO:0009236">
    <property type="term" value="P:cobalamin biosynthetic process"/>
    <property type="evidence" value="ECO:0007669"/>
    <property type="project" value="InterPro"/>
</dbReference>
<dbReference type="CDD" id="cd01415">
    <property type="entry name" value="SAICAR_synt_PurC"/>
    <property type="match status" value="1"/>
</dbReference>
<dbReference type="FunFam" id="3.30.200.20:FF:000086">
    <property type="entry name" value="Phosphoribosylaminoimidazole-succinocarboxamide synthase"/>
    <property type="match status" value="1"/>
</dbReference>
<dbReference type="FunFam" id="3.30.470.20:FF:000006">
    <property type="entry name" value="Phosphoribosylaminoimidazole-succinocarboxamide synthase"/>
    <property type="match status" value="1"/>
</dbReference>
<dbReference type="Gene3D" id="3.30.470.20">
    <property type="entry name" value="ATP-grasp fold, B domain"/>
    <property type="match status" value="1"/>
</dbReference>
<dbReference type="Gene3D" id="3.30.200.20">
    <property type="entry name" value="Phosphorylase Kinase, domain 1"/>
    <property type="match status" value="1"/>
</dbReference>
<dbReference type="HAMAP" id="MF_00137">
    <property type="entry name" value="SAICAR_synth"/>
    <property type="match status" value="1"/>
</dbReference>
<dbReference type="InterPro" id="IPR028923">
    <property type="entry name" value="SAICAR_synt/ADE2_N"/>
</dbReference>
<dbReference type="InterPro" id="IPR033934">
    <property type="entry name" value="SAICAR_synt_PurC"/>
</dbReference>
<dbReference type="InterPro" id="IPR001636">
    <property type="entry name" value="SAICAR_synth"/>
</dbReference>
<dbReference type="InterPro" id="IPR050089">
    <property type="entry name" value="SAICAR_synthetase"/>
</dbReference>
<dbReference type="InterPro" id="IPR018236">
    <property type="entry name" value="SAICAR_synthetase_CS"/>
</dbReference>
<dbReference type="NCBIfam" id="TIGR00081">
    <property type="entry name" value="purC"/>
    <property type="match status" value="1"/>
</dbReference>
<dbReference type="PANTHER" id="PTHR43599">
    <property type="entry name" value="MULTIFUNCTIONAL PROTEIN ADE2"/>
    <property type="match status" value="1"/>
</dbReference>
<dbReference type="PANTHER" id="PTHR43599:SF3">
    <property type="entry name" value="SI:DKEY-6E2.2"/>
    <property type="match status" value="1"/>
</dbReference>
<dbReference type="Pfam" id="PF01259">
    <property type="entry name" value="SAICAR_synt"/>
    <property type="match status" value="1"/>
</dbReference>
<dbReference type="SUPFAM" id="SSF56104">
    <property type="entry name" value="SAICAR synthase-like"/>
    <property type="match status" value="1"/>
</dbReference>
<dbReference type="PROSITE" id="PS01057">
    <property type="entry name" value="SAICAR_SYNTHETASE_1"/>
    <property type="match status" value="1"/>
</dbReference>
<dbReference type="PROSITE" id="PS01058">
    <property type="entry name" value="SAICAR_SYNTHETASE_2"/>
    <property type="match status" value="1"/>
</dbReference>
<feature type="chain" id="PRO_0000100868" description="Phosphoribosylaminoimidazole-succinocarboxamide synthase">
    <location>
        <begin position="1"/>
        <end position="237"/>
    </location>
</feature>
<name>PUR7_SHIFL</name>
<accession>P0A7E0</accession>
<accession>P21155</accession>
<gene>
    <name type="primary">purC</name>
    <name type="ordered locus">SF2519</name>
    <name type="ordered locus">S2669</name>
</gene>
<reference key="1">
    <citation type="journal article" date="2002" name="Nucleic Acids Res.">
        <title>Genome sequence of Shigella flexneri 2a: insights into pathogenicity through comparison with genomes of Escherichia coli K12 and O157.</title>
        <authorList>
            <person name="Jin Q."/>
            <person name="Yuan Z."/>
            <person name="Xu J."/>
            <person name="Wang Y."/>
            <person name="Shen Y."/>
            <person name="Lu W."/>
            <person name="Wang J."/>
            <person name="Liu H."/>
            <person name="Yang J."/>
            <person name="Yang F."/>
            <person name="Zhang X."/>
            <person name="Zhang J."/>
            <person name="Yang G."/>
            <person name="Wu H."/>
            <person name="Qu D."/>
            <person name="Dong J."/>
            <person name="Sun L."/>
            <person name="Xue Y."/>
            <person name="Zhao A."/>
            <person name="Gao Y."/>
            <person name="Zhu J."/>
            <person name="Kan B."/>
            <person name="Ding K."/>
            <person name="Chen S."/>
            <person name="Cheng H."/>
            <person name="Yao Z."/>
            <person name="He B."/>
            <person name="Chen R."/>
            <person name="Ma D."/>
            <person name="Qiang B."/>
            <person name="Wen Y."/>
            <person name="Hou Y."/>
            <person name="Yu J."/>
        </authorList>
    </citation>
    <scope>NUCLEOTIDE SEQUENCE [LARGE SCALE GENOMIC DNA]</scope>
    <source>
        <strain>301 / Serotype 2a</strain>
    </source>
</reference>
<reference key="2">
    <citation type="journal article" date="2003" name="Infect. Immun.">
        <title>Complete genome sequence and comparative genomics of Shigella flexneri serotype 2a strain 2457T.</title>
        <authorList>
            <person name="Wei J."/>
            <person name="Goldberg M.B."/>
            <person name="Burland V."/>
            <person name="Venkatesan M.M."/>
            <person name="Deng W."/>
            <person name="Fournier G."/>
            <person name="Mayhew G.F."/>
            <person name="Plunkett G. III"/>
            <person name="Rose D.J."/>
            <person name="Darling A."/>
            <person name="Mau B."/>
            <person name="Perna N.T."/>
            <person name="Payne S.M."/>
            <person name="Runyen-Janecky L.J."/>
            <person name="Zhou S."/>
            <person name="Schwartz D.C."/>
            <person name="Blattner F.R."/>
        </authorList>
    </citation>
    <scope>NUCLEOTIDE SEQUENCE [LARGE SCALE GENOMIC DNA]</scope>
    <source>
        <strain>ATCC 700930 / 2457T / Serotype 2a</strain>
    </source>
</reference>
<protein>
    <recommendedName>
        <fullName>Phosphoribosylaminoimidazole-succinocarboxamide synthase</fullName>
        <ecNumber>6.3.2.6</ecNumber>
    </recommendedName>
    <alternativeName>
        <fullName>SAICAR synthetase</fullName>
    </alternativeName>
</protein>
<keyword id="KW-0067">ATP-binding</keyword>
<keyword id="KW-0436">Ligase</keyword>
<keyword id="KW-0547">Nucleotide-binding</keyword>
<keyword id="KW-0658">Purine biosynthesis</keyword>
<keyword id="KW-1185">Reference proteome</keyword>
<comment type="catalytic activity">
    <reaction>
        <text>5-amino-1-(5-phospho-D-ribosyl)imidazole-4-carboxylate + L-aspartate + ATP = (2S)-2-[5-amino-1-(5-phospho-beta-D-ribosyl)imidazole-4-carboxamido]succinate + ADP + phosphate + 2 H(+)</text>
        <dbReference type="Rhea" id="RHEA:22628"/>
        <dbReference type="ChEBI" id="CHEBI:15378"/>
        <dbReference type="ChEBI" id="CHEBI:29991"/>
        <dbReference type="ChEBI" id="CHEBI:30616"/>
        <dbReference type="ChEBI" id="CHEBI:43474"/>
        <dbReference type="ChEBI" id="CHEBI:58443"/>
        <dbReference type="ChEBI" id="CHEBI:77657"/>
        <dbReference type="ChEBI" id="CHEBI:456216"/>
        <dbReference type="EC" id="6.3.2.6"/>
    </reaction>
</comment>
<comment type="pathway">
    <text>Purine metabolism; IMP biosynthesis via de novo pathway; 5-amino-1-(5-phospho-D-ribosyl)imidazole-4-carboxamide from 5-amino-1-(5-phospho-D-ribosyl)imidazole-4-carboxylate: step 1/2.</text>
</comment>
<comment type="subunit">
    <text evidence="1">Homotrimer.</text>
</comment>
<comment type="similarity">
    <text evidence="2">Belongs to the SAICAR synthetase family.</text>
</comment>